<organism>
    <name type="scientific">Rickettsia typhi (strain ATCC VR-144 / Wilmington)</name>
    <dbReference type="NCBI Taxonomy" id="257363"/>
    <lineage>
        <taxon>Bacteria</taxon>
        <taxon>Pseudomonadati</taxon>
        <taxon>Pseudomonadota</taxon>
        <taxon>Alphaproteobacteria</taxon>
        <taxon>Rickettsiales</taxon>
        <taxon>Rickettsiaceae</taxon>
        <taxon>Rickettsieae</taxon>
        <taxon>Rickettsia</taxon>
        <taxon>typhus group</taxon>
    </lineage>
</organism>
<accession>Q68XY5</accession>
<reference key="1">
    <citation type="journal article" date="2004" name="J. Bacteriol.">
        <title>Complete genome sequence of Rickettsia typhi and comparison with sequences of other Rickettsiae.</title>
        <authorList>
            <person name="McLeod M.P."/>
            <person name="Qin X."/>
            <person name="Karpathy S.E."/>
            <person name="Gioia J."/>
            <person name="Highlander S.K."/>
            <person name="Fox G.E."/>
            <person name="McNeill T.Z."/>
            <person name="Jiang H."/>
            <person name="Muzny D."/>
            <person name="Jacob L.S."/>
            <person name="Hawes A.C."/>
            <person name="Sodergren E."/>
            <person name="Gill R."/>
            <person name="Hume J."/>
            <person name="Morgan M."/>
            <person name="Fan G."/>
            <person name="Amin A.G."/>
            <person name="Gibbs R.A."/>
            <person name="Hong C."/>
            <person name="Yu X.-J."/>
            <person name="Walker D.H."/>
            <person name="Weinstock G.M."/>
        </authorList>
    </citation>
    <scope>NUCLEOTIDE SEQUENCE [LARGE SCALE GENOMIC DNA]</scope>
    <source>
        <strain>ATCC VR-144 / Wilmington</strain>
    </source>
</reference>
<feature type="chain" id="PRO_0000228576" description="Ribonuclease 3">
    <location>
        <begin position="1"/>
        <end position="227"/>
    </location>
</feature>
<feature type="domain" description="RNase III" evidence="1">
    <location>
        <begin position="4"/>
        <end position="133"/>
    </location>
</feature>
<feature type="domain" description="DRBM" evidence="1">
    <location>
        <begin position="158"/>
        <end position="226"/>
    </location>
</feature>
<feature type="active site" evidence="1">
    <location>
        <position position="50"/>
    </location>
</feature>
<feature type="active site" evidence="1">
    <location>
        <position position="122"/>
    </location>
</feature>
<feature type="binding site" evidence="1">
    <location>
        <position position="46"/>
    </location>
    <ligand>
        <name>Mg(2+)</name>
        <dbReference type="ChEBI" id="CHEBI:18420"/>
    </ligand>
</feature>
<feature type="binding site" evidence="1">
    <location>
        <position position="119"/>
    </location>
    <ligand>
        <name>Mg(2+)</name>
        <dbReference type="ChEBI" id="CHEBI:18420"/>
    </ligand>
</feature>
<feature type="binding site" evidence="1">
    <location>
        <position position="122"/>
    </location>
    <ligand>
        <name>Mg(2+)</name>
        <dbReference type="ChEBI" id="CHEBI:18420"/>
    </ligand>
</feature>
<protein>
    <recommendedName>
        <fullName evidence="1">Ribonuclease 3</fullName>
        <ecNumber evidence="1">3.1.26.3</ecNumber>
    </recommendedName>
    <alternativeName>
        <fullName evidence="1">Ribonuclease III</fullName>
        <shortName evidence="1">RNase III</shortName>
    </alternativeName>
</protein>
<gene>
    <name evidence="1" type="primary">rnc</name>
    <name type="ordered locus">RT0019</name>
</gene>
<evidence type="ECO:0000255" key="1">
    <source>
        <dbReference type="HAMAP-Rule" id="MF_00104"/>
    </source>
</evidence>
<keyword id="KW-0963">Cytoplasm</keyword>
<keyword id="KW-0255">Endonuclease</keyword>
<keyword id="KW-0378">Hydrolase</keyword>
<keyword id="KW-0460">Magnesium</keyword>
<keyword id="KW-0479">Metal-binding</keyword>
<keyword id="KW-0507">mRNA processing</keyword>
<keyword id="KW-0540">Nuclease</keyword>
<keyword id="KW-0694">RNA-binding</keyword>
<keyword id="KW-0698">rRNA processing</keyword>
<keyword id="KW-0699">rRNA-binding</keyword>
<keyword id="KW-0819">tRNA processing</keyword>
<sequence>MESFEKLETLLGYSFKNKELLIEALSHPSLRQYHEYKYDKDYERLEFLGDAVLNLLITEILFKNFENYKEGNLAKIRSYLVCKETICIVGTKLALKDYIIMTHGEEVAGGRDNPNNIENVTEALIAAIYLDSNIEITHNIIEKLWAEFMKVQNLTDYDPKTALQEWAQASSNHLPIYRLIKREGAAHSSIFTVLVKVKDYEQICTGYSIKEAEKKAARCLLHRLKND</sequence>
<name>RNC_RICTY</name>
<dbReference type="EC" id="3.1.26.3" evidence="1"/>
<dbReference type="EMBL" id="AE017197">
    <property type="protein sequence ID" value="AAU03507.1"/>
    <property type="molecule type" value="Genomic_DNA"/>
</dbReference>
<dbReference type="RefSeq" id="WP_011190494.1">
    <property type="nucleotide sequence ID" value="NC_006142.1"/>
</dbReference>
<dbReference type="SMR" id="Q68XY5"/>
<dbReference type="KEGG" id="rty:RT0019"/>
<dbReference type="eggNOG" id="COG0571">
    <property type="taxonomic scope" value="Bacteria"/>
</dbReference>
<dbReference type="HOGENOM" id="CLU_000907_1_1_5"/>
<dbReference type="OrthoDB" id="9805026at2"/>
<dbReference type="Proteomes" id="UP000000604">
    <property type="component" value="Chromosome"/>
</dbReference>
<dbReference type="GO" id="GO:0005737">
    <property type="term" value="C:cytoplasm"/>
    <property type="evidence" value="ECO:0007669"/>
    <property type="project" value="UniProtKB-SubCell"/>
</dbReference>
<dbReference type="GO" id="GO:0003725">
    <property type="term" value="F:double-stranded RNA binding"/>
    <property type="evidence" value="ECO:0007669"/>
    <property type="project" value="TreeGrafter"/>
</dbReference>
<dbReference type="GO" id="GO:0046872">
    <property type="term" value="F:metal ion binding"/>
    <property type="evidence" value="ECO:0007669"/>
    <property type="project" value="UniProtKB-KW"/>
</dbReference>
<dbReference type="GO" id="GO:0004525">
    <property type="term" value="F:ribonuclease III activity"/>
    <property type="evidence" value="ECO:0007669"/>
    <property type="project" value="UniProtKB-UniRule"/>
</dbReference>
<dbReference type="GO" id="GO:0019843">
    <property type="term" value="F:rRNA binding"/>
    <property type="evidence" value="ECO:0007669"/>
    <property type="project" value="UniProtKB-KW"/>
</dbReference>
<dbReference type="GO" id="GO:0006397">
    <property type="term" value="P:mRNA processing"/>
    <property type="evidence" value="ECO:0007669"/>
    <property type="project" value="UniProtKB-UniRule"/>
</dbReference>
<dbReference type="GO" id="GO:0010468">
    <property type="term" value="P:regulation of gene expression"/>
    <property type="evidence" value="ECO:0007669"/>
    <property type="project" value="TreeGrafter"/>
</dbReference>
<dbReference type="GO" id="GO:0006364">
    <property type="term" value="P:rRNA processing"/>
    <property type="evidence" value="ECO:0007669"/>
    <property type="project" value="UniProtKB-UniRule"/>
</dbReference>
<dbReference type="GO" id="GO:0008033">
    <property type="term" value="P:tRNA processing"/>
    <property type="evidence" value="ECO:0007669"/>
    <property type="project" value="UniProtKB-KW"/>
</dbReference>
<dbReference type="CDD" id="cd10845">
    <property type="entry name" value="DSRM_RNAse_III_family"/>
    <property type="match status" value="1"/>
</dbReference>
<dbReference type="CDD" id="cd00593">
    <property type="entry name" value="RIBOc"/>
    <property type="match status" value="1"/>
</dbReference>
<dbReference type="FunFam" id="1.10.1520.10:FF:000001">
    <property type="entry name" value="Ribonuclease 3"/>
    <property type="match status" value="1"/>
</dbReference>
<dbReference type="Gene3D" id="3.30.160.20">
    <property type="match status" value="1"/>
</dbReference>
<dbReference type="Gene3D" id="1.10.1520.10">
    <property type="entry name" value="Ribonuclease III domain"/>
    <property type="match status" value="1"/>
</dbReference>
<dbReference type="HAMAP" id="MF_00104">
    <property type="entry name" value="RNase_III"/>
    <property type="match status" value="1"/>
</dbReference>
<dbReference type="InterPro" id="IPR014720">
    <property type="entry name" value="dsRBD_dom"/>
</dbReference>
<dbReference type="InterPro" id="IPR011907">
    <property type="entry name" value="RNase_III"/>
</dbReference>
<dbReference type="InterPro" id="IPR000999">
    <property type="entry name" value="RNase_III_dom"/>
</dbReference>
<dbReference type="InterPro" id="IPR036389">
    <property type="entry name" value="RNase_III_sf"/>
</dbReference>
<dbReference type="NCBIfam" id="TIGR02191">
    <property type="entry name" value="RNaseIII"/>
    <property type="match status" value="1"/>
</dbReference>
<dbReference type="PANTHER" id="PTHR11207:SF0">
    <property type="entry name" value="RIBONUCLEASE 3"/>
    <property type="match status" value="1"/>
</dbReference>
<dbReference type="PANTHER" id="PTHR11207">
    <property type="entry name" value="RIBONUCLEASE III"/>
    <property type="match status" value="1"/>
</dbReference>
<dbReference type="Pfam" id="PF00035">
    <property type="entry name" value="dsrm"/>
    <property type="match status" value="1"/>
</dbReference>
<dbReference type="Pfam" id="PF14622">
    <property type="entry name" value="Ribonucleas_3_3"/>
    <property type="match status" value="1"/>
</dbReference>
<dbReference type="SMART" id="SM00358">
    <property type="entry name" value="DSRM"/>
    <property type="match status" value="1"/>
</dbReference>
<dbReference type="SMART" id="SM00535">
    <property type="entry name" value="RIBOc"/>
    <property type="match status" value="1"/>
</dbReference>
<dbReference type="SUPFAM" id="SSF54768">
    <property type="entry name" value="dsRNA-binding domain-like"/>
    <property type="match status" value="1"/>
</dbReference>
<dbReference type="SUPFAM" id="SSF69065">
    <property type="entry name" value="RNase III domain-like"/>
    <property type="match status" value="1"/>
</dbReference>
<dbReference type="PROSITE" id="PS50137">
    <property type="entry name" value="DS_RBD"/>
    <property type="match status" value="1"/>
</dbReference>
<dbReference type="PROSITE" id="PS00517">
    <property type="entry name" value="RNASE_3_1"/>
    <property type="match status" value="1"/>
</dbReference>
<dbReference type="PROSITE" id="PS50142">
    <property type="entry name" value="RNASE_3_2"/>
    <property type="match status" value="1"/>
</dbReference>
<comment type="function">
    <text evidence="1">Digests double-stranded RNA. Involved in the processing of primary rRNA transcript to yield the immediate precursors to the large and small rRNAs (23S and 16S). Processes some mRNAs, and tRNAs when they are encoded in the rRNA operon. Processes pre-crRNA and tracrRNA of type II CRISPR loci if present in the organism.</text>
</comment>
<comment type="catalytic activity">
    <reaction evidence="1">
        <text>Endonucleolytic cleavage to 5'-phosphomonoester.</text>
        <dbReference type="EC" id="3.1.26.3"/>
    </reaction>
</comment>
<comment type="cofactor">
    <cofactor evidence="1">
        <name>Mg(2+)</name>
        <dbReference type="ChEBI" id="CHEBI:18420"/>
    </cofactor>
</comment>
<comment type="subunit">
    <text evidence="1">Homodimer.</text>
</comment>
<comment type="subcellular location">
    <subcellularLocation>
        <location evidence="1">Cytoplasm</location>
    </subcellularLocation>
</comment>
<comment type="similarity">
    <text evidence="1">Belongs to the ribonuclease III family.</text>
</comment>
<proteinExistence type="inferred from homology"/>